<dbReference type="EMBL" id="CH933810">
    <property type="protein sequence ID" value="EDW06874.1"/>
    <property type="molecule type" value="Genomic_DNA"/>
</dbReference>
<dbReference type="SMR" id="B4L2J8"/>
<dbReference type="FunCoup" id="B4L2J8">
    <property type="interactions" value="2618"/>
</dbReference>
<dbReference type="EnsemblMetazoa" id="FBtr0165897">
    <property type="protein sequence ID" value="FBpp0164389"/>
    <property type="gene ID" value="FBgn0137922"/>
</dbReference>
<dbReference type="EnsemblMetazoa" id="XM_002009521.4">
    <property type="protein sequence ID" value="XP_002009557.1"/>
    <property type="gene ID" value="LOC6583895"/>
</dbReference>
<dbReference type="GeneID" id="6583895"/>
<dbReference type="KEGG" id="dmo:Dmoj_GI15172"/>
<dbReference type="CTD" id="44409"/>
<dbReference type="eggNOG" id="KOG1104">
    <property type="taxonomic scope" value="Eukaryota"/>
</dbReference>
<dbReference type="HOGENOM" id="CLU_013207_0_0_1"/>
<dbReference type="InParanoid" id="B4L2J8"/>
<dbReference type="OMA" id="CAAEGLM"/>
<dbReference type="OrthoDB" id="10252707at2759"/>
<dbReference type="PhylomeDB" id="B4L2J8"/>
<dbReference type="ChiTaRS" id="Cbp80">
    <property type="organism name" value="fly"/>
</dbReference>
<dbReference type="Proteomes" id="UP000009192">
    <property type="component" value="Unassembled WGS sequence"/>
</dbReference>
<dbReference type="GO" id="GO:0005846">
    <property type="term" value="C:nuclear cap binding complex"/>
    <property type="evidence" value="ECO:0007669"/>
    <property type="project" value="InterPro"/>
</dbReference>
<dbReference type="GO" id="GO:0005634">
    <property type="term" value="C:nucleus"/>
    <property type="evidence" value="ECO:0007669"/>
    <property type="project" value="UniProtKB-SubCell"/>
</dbReference>
<dbReference type="GO" id="GO:0099524">
    <property type="term" value="C:postsynaptic cytosol"/>
    <property type="evidence" value="ECO:0007669"/>
    <property type="project" value="EnsemblMetazoa"/>
</dbReference>
<dbReference type="GO" id="GO:0099523">
    <property type="term" value="C:presynaptic cytosol"/>
    <property type="evidence" value="ECO:0007669"/>
    <property type="project" value="EnsemblMetazoa"/>
</dbReference>
<dbReference type="GO" id="GO:0003729">
    <property type="term" value="F:mRNA binding"/>
    <property type="evidence" value="ECO:0007669"/>
    <property type="project" value="TreeGrafter"/>
</dbReference>
<dbReference type="GO" id="GO:0000339">
    <property type="term" value="F:RNA cap binding"/>
    <property type="evidence" value="ECO:0007669"/>
    <property type="project" value="InterPro"/>
</dbReference>
<dbReference type="GO" id="GO:0006370">
    <property type="term" value="P:7-methylguanosine mRNA capping"/>
    <property type="evidence" value="ECO:0007669"/>
    <property type="project" value="UniProtKB-KW"/>
</dbReference>
<dbReference type="GO" id="GO:0006406">
    <property type="term" value="P:mRNA export from nucleus"/>
    <property type="evidence" value="ECO:0007669"/>
    <property type="project" value="InterPro"/>
</dbReference>
<dbReference type="GO" id="GO:0045071">
    <property type="term" value="P:negative regulation of viral genome replication"/>
    <property type="evidence" value="ECO:0007669"/>
    <property type="project" value="EnsemblMetazoa"/>
</dbReference>
<dbReference type="GO" id="GO:0000184">
    <property type="term" value="P:nuclear-transcribed mRNA catabolic process, nonsense-mediated decay"/>
    <property type="evidence" value="ECO:0007669"/>
    <property type="project" value="TreeGrafter"/>
</dbReference>
<dbReference type="GO" id="GO:0031053">
    <property type="term" value="P:primary miRNA processing"/>
    <property type="evidence" value="ECO:0007669"/>
    <property type="project" value="EnsemblMetazoa"/>
</dbReference>
<dbReference type="GO" id="GO:0035194">
    <property type="term" value="P:regulatory ncRNA-mediated post-transcriptional gene silencing"/>
    <property type="evidence" value="ECO:0007669"/>
    <property type="project" value="EnsemblMetazoa"/>
</dbReference>
<dbReference type="GO" id="GO:0008380">
    <property type="term" value="P:RNA splicing"/>
    <property type="evidence" value="ECO:0007669"/>
    <property type="project" value="UniProtKB-KW"/>
</dbReference>
<dbReference type="GO" id="GO:0030422">
    <property type="term" value="P:siRNA processing"/>
    <property type="evidence" value="ECO:0007669"/>
    <property type="project" value="EnsemblMetazoa"/>
</dbReference>
<dbReference type="FunFam" id="1.25.40.180:FF:000010">
    <property type="entry name" value="Nuclear cap-binding protein subunit 1"/>
    <property type="match status" value="1"/>
</dbReference>
<dbReference type="FunFam" id="1.25.40.180:FF:000041">
    <property type="entry name" value="Nuclear cap-binding protein subunit 1"/>
    <property type="match status" value="1"/>
</dbReference>
<dbReference type="Gene3D" id="1.25.40.180">
    <property type="match status" value="3"/>
</dbReference>
<dbReference type="InterPro" id="IPR016024">
    <property type="entry name" value="ARM-type_fold"/>
</dbReference>
<dbReference type="InterPro" id="IPR027159">
    <property type="entry name" value="CBP80"/>
</dbReference>
<dbReference type="InterPro" id="IPR015172">
    <property type="entry name" value="MIF4G-like_typ-1"/>
</dbReference>
<dbReference type="InterPro" id="IPR015174">
    <property type="entry name" value="MIF4G-like_typ-2"/>
</dbReference>
<dbReference type="InterPro" id="IPR003890">
    <property type="entry name" value="MIF4G-like_typ-3"/>
</dbReference>
<dbReference type="PANTHER" id="PTHR12412">
    <property type="entry name" value="CAP BINDING PROTEIN"/>
    <property type="match status" value="1"/>
</dbReference>
<dbReference type="PANTHER" id="PTHR12412:SF2">
    <property type="entry name" value="NUCLEAR CAP-BINDING PROTEIN SUBUNIT 1"/>
    <property type="match status" value="1"/>
</dbReference>
<dbReference type="Pfam" id="PF02854">
    <property type="entry name" value="MIF4G"/>
    <property type="match status" value="1"/>
</dbReference>
<dbReference type="Pfam" id="PF09088">
    <property type="entry name" value="MIF4G_like"/>
    <property type="match status" value="1"/>
</dbReference>
<dbReference type="Pfam" id="PF09090">
    <property type="entry name" value="MIF4G_like_2"/>
    <property type="match status" value="1"/>
</dbReference>
<dbReference type="SMART" id="SM00543">
    <property type="entry name" value="MIF4G"/>
    <property type="match status" value="1"/>
</dbReference>
<dbReference type="SUPFAM" id="SSF48371">
    <property type="entry name" value="ARM repeat"/>
    <property type="match status" value="3"/>
</dbReference>
<keyword id="KW-0506">mRNA capping</keyword>
<keyword id="KW-0507">mRNA processing</keyword>
<keyword id="KW-0508">mRNA splicing</keyword>
<keyword id="KW-0539">Nucleus</keyword>
<keyword id="KW-0597">Phosphoprotein</keyword>
<keyword id="KW-1185">Reference proteome</keyword>
<keyword id="KW-0943">RNA-mediated gene silencing</keyword>
<protein>
    <recommendedName>
        <fullName>Nuclear cap-binding protein subunit 1</fullName>
    </recommendedName>
    <alternativeName>
        <fullName>80 kDa nuclear cap-binding protein</fullName>
        <shortName>CBP80</shortName>
        <shortName>NCBP 80 kDa subunit</shortName>
    </alternativeName>
</protein>
<accession>B4L2J8</accession>
<sequence>MSRRRAHDTEDESFDHRRNKRRRVSENQEIEDRLESLILRVGERSTSSVESNLEGLVSVLEADLGTFRLKILRILSDCAVRMPEKCTVYTTLVGLLNAKNYKFGGEFVDHMVKTFKESLKLCRWDAARYSLRFLADLVNCHVISATSLLQLLDTMIDVSNEDTVPQVRRDWFVFAVLSTLPWVGRDLYEKKESALESLLLRIEVYLNKRSKKHHNALRVWSSDAPHPQEEYLDCLWAQIRKLRQDNWAEKHIPRPYLVFDSILCEALQHNLPQITPPPHHASFEYPMPWVVYRMFDYTDCPDGPNLPGAHSIERFLIEEHLHHIIETHHHERKDCAAQLLNFPFKHKIPLEYCIVEVIFAELFHMPTPRYLDICYGSILIELCKLQPGTLPQVLAQATEILFMRIDSMNTSCFDRFVNWFSYHLSNFKFTWSWDEWDSCLLLDAEHPRPKFIQEVLQKCLRLSYHQRITEMMPTTYAKLIPAPPVPNYKYTNEEAANLPGITVALQLVGAIRQKCTPEEVVNILKEIPNTGYSGEEMSDGSFNALKIDVFVQTLLNLGSKSFSHSFAAISKFHAVFRALAETEEAQICILHNIFELWSSHQQMMVVLIDKLLKLQIVDCSAVATWIFSKEMTGEFTKMYLWEILHLTIKKMNKHVIKLNTELSEAKEKLSKADSSSSDTDEDTPHKRKKPITHADKPSEEVVERMEEKLEAANVNQKRLFLIVFQRFIMILSEHLLRSDTDGRDPDTDWYRWTIGRLQQVFLMHHEQVQKYSSTLETLLFTSDLDSHILEVFQQFVALRA</sequence>
<organism>
    <name type="scientific">Drosophila mojavensis</name>
    <name type="common">Fruit fly</name>
    <dbReference type="NCBI Taxonomy" id="7230"/>
    <lineage>
        <taxon>Eukaryota</taxon>
        <taxon>Metazoa</taxon>
        <taxon>Ecdysozoa</taxon>
        <taxon>Arthropoda</taxon>
        <taxon>Hexapoda</taxon>
        <taxon>Insecta</taxon>
        <taxon>Pterygota</taxon>
        <taxon>Neoptera</taxon>
        <taxon>Endopterygota</taxon>
        <taxon>Diptera</taxon>
        <taxon>Brachycera</taxon>
        <taxon>Muscomorpha</taxon>
        <taxon>Ephydroidea</taxon>
        <taxon>Drosophilidae</taxon>
        <taxon>Drosophila</taxon>
    </lineage>
</organism>
<name>NCBP1_DROMO</name>
<comment type="function">
    <text evidence="1">Component of the cap-binding complex (CBC), which binds cotranscriptionally to the 5'-cap of pre-mRNAs and is involved in various processes such as pre-mRNA splicing and RNA-mediated gene silencing (RNAi). The CBC complex is involved in miRNA-mediated RNA interference via its interaction with Ars2 and is required for primary microRNAs (miRNAs) processing. Also involved in innate immunity via the short interfering RNAs (siRNAs) processing machinery by restricting the viral RNA production. In the CBC complex, Cbp80 does not bind directly capped RNAs (m7GpppG-capped RNA) but is required to stabilize the movement of the N-terminal loop of Cbp20 and lock the CBC into a high affinity cap-binding state with the cap structure (By similarity).</text>
</comment>
<comment type="subunit">
    <text evidence="1">Component of the nuclear cap-binding complex (CBC), a heterodimer composed of Cbp80 and Cbp20 that interacts with m7GpppG-capped RNA.</text>
</comment>
<comment type="subcellular location">
    <subcellularLocation>
        <location evidence="1">Nucleus</location>
    </subcellularLocation>
</comment>
<comment type="similarity">
    <text evidence="3">Belongs to the NCBP1 family.</text>
</comment>
<evidence type="ECO:0000250" key="1"/>
<evidence type="ECO:0000256" key="2">
    <source>
        <dbReference type="SAM" id="MobiDB-lite"/>
    </source>
</evidence>
<evidence type="ECO:0000305" key="3"/>
<reference key="1">
    <citation type="journal article" date="2007" name="Nature">
        <title>Evolution of genes and genomes on the Drosophila phylogeny.</title>
        <authorList>
            <consortium name="Drosophila 12 genomes consortium"/>
        </authorList>
    </citation>
    <scope>NUCLEOTIDE SEQUENCE [LARGE SCALE GENOMIC DNA]</scope>
    <source>
        <strain>Tucson 15081-1352.22</strain>
    </source>
</reference>
<feature type="chain" id="PRO_0000385236" description="Nuclear cap-binding protein subunit 1">
    <location>
        <begin position="1"/>
        <end position="800"/>
    </location>
</feature>
<feature type="domain" description="MIF4G">
    <location>
        <begin position="31"/>
        <end position="243"/>
    </location>
</feature>
<feature type="region of interest" description="Disordered" evidence="2">
    <location>
        <begin position="1"/>
        <end position="25"/>
    </location>
</feature>
<feature type="region of interest" description="Disordered" evidence="2">
    <location>
        <begin position="668"/>
        <end position="700"/>
    </location>
</feature>
<feature type="modified residue" description="Phosphothreonine" evidence="1">
    <location>
        <position position="9"/>
    </location>
</feature>
<gene>
    <name type="primary">Cbp80</name>
    <name type="ORF">GI15172</name>
</gene>
<proteinExistence type="inferred from homology"/>